<feature type="chain" id="PRO_1000076520" description="Elongation factor P">
    <location>
        <begin position="1"/>
        <end position="187"/>
    </location>
</feature>
<reference key="1">
    <citation type="submission" date="2007-04" db="EMBL/GenBank/DDBJ databases">
        <title>Complete sequence of chromosome of Mycobacterium gilvum PYR-GCK.</title>
        <authorList>
            <consortium name="US DOE Joint Genome Institute"/>
            <person name="Copeland A."/>
            <person name="Lucas S."/>
            <person name="Lapidus A."/>
            <person name="Barry K."/>
            <person name="Detter J.C."/>
            <person name="Glavina del Rio T."/>
            <person name="Hammon N."/>
            <person name="Israni S."/>
            <person name="Dalin E."/>
            <person name="Tice H."/>
            <person name="Pitluck S."/>
            <person name="Chain P."/>
            <person name="Malfatti S."/>
            <person name="Shin M."/>
            <person name="Vergez L."/>
            <person name="Schmutz J."/>
            <person name="Larimer F."/>
            <person name="Land M."/>
            <person name="Hauser L."/>
            <person name="Kyrpides N."/>
            <person name="Mikhailova N."/>
            <person name="Miller C."/>
            <person name="Richardson P."/>
        </authorList>
    </citation>
    <scope>NUCLEOTIDE SEQUENCE [LARGE SCALE GENOMIC DNA]</scope>
    <source>
        <strain>PYR-GCK</strain>
    </source>
</reference>
<accession>A4TBX4</accession>
<comment type="function">
    <text evidence="1">Involved in peptide bond synthesis. Stimulates efficient translation and peptide-bond synthesis on native or reconstituted 70S ribosomes in vitro. Probably functions indirectly by altering the affinity of the ribosome for aminoacyl-tRNA, thus increasing their reactivity as acceptors for peptidyl transferase.</text>
</comment>
<comment type="pathway">
    <text evidence="1">Protein biosynthesis; polypeptide chain elongation.</text>
</comment>
<comment type="subcellular location">
    <subcellularLocation>
        <location evidence="1">Cytoplasm</location>
    </subcellularLocation>
</comment>
<comment type="similarity">
    <text evidence="1">Belongs to the elongation factor P family.</text>
</comment>
<gene>
    <name evidence="1" type="primary">efp</name>
    <name type="ordered locus">Mflv_3752</name>
</gene>
<proteinExistence type="inferred from homology"/>
<protein>
    <recommendedName>
        <fullName evidence="1">Elongation factor P</fullName>
        <shortName evidence="1">EF-P</shortName>
    </recommendedName>
</protein>
<keyword id="KW-0963">Cytoplasm</keyword>
<keyword id="KW-0251">Elongation factor</keyword>
<keyword id="KW-0648">Protein biosynthesis</keyword>
<name>EFP_MYCGI</name>
<evidence type="ECO:0000255" key="1">
    <source>
        <dbReference type="HAMAP-Rule" id="MF_00141"/>
    </source>
</evidence>
<organism>
    <name type="scientific">Mycolicibacterium gilvum (strain PYR-GCK)</name>
    <name type="common">Mycobacterium gilvum (strain PYR-GCK)</name>
    <dbReference type="NCBI Taxonomy" id="350054"/>
    <lineage>
        <taxon>Bacteria</taxon>
        <taxon>Bacillati</taxon>
        <taxon>Actinomycetota</taxon>
        <taxon>Actinomycetes</taxon>
        <taxon>Mycobacteriales</taxon>
        <taxon>Mycobacteriaceae</taxon>
        <taxon>Mycolicibacterium</taxon>
    </lineage>
</organism>
<sequence length="187" mass="20435">MASTADFKNGLVLQIDGQLWQIVEFQHVKPGKGPAFVRTKLKNVVSGKVVDKTYNAGVKVETATVDRRDATYLYRDGSDFVFMDSEDFEQHPLPEALVGRLAGFLLESMPVQIAFHDGVPLYLELPVTVELLVAHTEPGLQGDRSSAGTKPATMETGAEIQVPLFINTGDKLKVDSRDGSYLGRVNA</sequence>
<dbReference type="EMBL" id="CP000656">
    <property type="protein sequence ID" value="ABP46224.1"/>
    <property type="molecule type" value="Genomic_DNA"/>
</dbReference>
<dbReference type="SMR" id="A4TBX4"/>
<dbReference type="STRING" id="350054.Mflv_3752"/>
<dbReference type="KEGG" id="mgi:Mflv_3752"/>
<dbReference type="eggNOG" id="COG0231">
    <property type="taxonomic scope" value="Bacteria"/>
</dbReference>
<dbReference type="HOGENOM" id="CLU_074944_0_1_11"/>
<dbReference type="OrthoDB" id="9801844at2"/>
<dbReference type="UniPathway" id="UPA00345"/>
<dbReference type="GO" id="GO:0005737">
    <property type="term" value="C:cytoplasm"/>
    <property type="evidence" value="ECO:0007669"/>
    <property type="project" value="UniProtKB-SubCell"/>
</dbReference>
<dbReference type="GO" id="GO:0003746">
    <property type="term" value="F:translation elongation factor activity"/>
    <property type="evidence" value="ECO:0007669"/>
    <property type="project" value="UniProtKB-UniRule"/>
</dbReference>
<dbReference type="GO" id="GO:0043043">
    <property type="term" value="P:peptide biosynthetic process"/>
    <property type="evidence" value="ECO:0007669"/>
    <property type="project" value="InterPro"/>
</dbReference>
<dbReference type="CDD" id="cd04470">
    <property type="entry name" value="S1_EF-P_repeat_1"/>
    <property type="match status" value="1"/>
</dbReference>
<dbReference type="CDD" id="cd05794">
    <property type="entry name" value="S1_EF-P_repeat_2"/>
    <property type="match status" value="1"/>
</dbReference>
<dbReference type="FunFam" id="2.30.30.30:FF:000003">
    <property type="entry name" value="Elongation factor P"/>
    <property type="match status" value="1"/>
</dbReference>
<dbReference type="FunFam" id="2.40.50.140:FF:000004">
    <property type="entry name" value="Elongation factor P"/>
    <property type="match status" value="1"/>
</dbReference>
<dbReference type="FunFam" id="2.40.50.140:FF:000009">
    <property type="entry name" value="Elongation factor P"/>
    <property type="match status" value="1"/>
</dbReference>
<dbReference type="Gene3D" id="2.30.30.30">
    <property type="match status" value="1"/>
</dbReference>
<dbReference type="Gene3D" id="2.40.50.140">
    <property type="entry name" value="Nucleic acid-binding proteins"/>
    <property type="match status" value="2"/>
</dbReference>
<dbReference type="HAMAP" id="MF_00141">
    <property type="entry name" value="EF_P"/>
    <property type="match status" value="1"/>
</dbReference>
<dbReference type="InterPro" id="IPR015365">
    <property type="entry name" value="Elong-fact-P_C"/>
</dbReference>
<dbReference type="InterPro" id="IPR012340">
    <property type="entry name" value="NA-bd_OB-fold"/>
</dbReference>
<dbReference type="InterPro" id="IPR014722">
    <property type="entry name" value="Rib_uL2_dom2"/>
</dbReference>
<dbReference type="InterPro" id="IPR020599">
    <property type="entry name" value="Transl_elong_fac_P/YeiP"/>
</dbReference>
<dbReference type="InterPro" id="IPR013185">
    <property type="entry name" value="Transl_elong_KOW-like"/>
</dbReference>
<dbReference type="InterPro" id="IPR001059">
    <property type="entry name" value="Transl_elong_P/YeiP_cen"/>
</dbReference>
<dbReference type="InterPro" id="IPR013852">
    <property type="entry name" value="Transl_elong_P/YeiP_CS"/>
</dbReference>
<dbReference type="InterPro" id="IPR011768">
    <property type="entry name" value="Transl_elongation_fac_P"/>
</dbReference>
<dbReference type="InterPro" id="IPR008991">
    <property type="entry name" value="Translation_prot_SH3-like_sf"/>
</dbReference>
<dbReference type="NCBIfam" id="TIGR00038">
    <property type="entry name" value="efp"/>
    <property type="match status" value="1"/>
</dbReference>
<dbReference type="NCBIfam" id="NF001810">
    <property type="entry name" value="PRK00529.1"/>
    <property type="match status" value="1"/>
</dbReference>
<dbReference type="PANTHER" id="PTHR30053">
    <property type="entry name" value="ELONGATION FACTOR P"/>
    <property type="match status" value="1"/>
</dbReference>
<dbReference type="PANTHER" id="PTHR30053:SF12">
    <property type="entry name" value="ELONGATION FACTOR P (EF-P) FAMILY PROTEIN"/>
    <property type="match status" value="1"/>
</dbReference>
<dbReference type="Pfam" id="PF01132">
    <property type="entry name" value="EFP"/>
    <property type="match status" value="1"/>
</dbReference>
<dbReference type="Pfam" id="PF08207">
    <property type="entry name" value="EFP_N"/>
    <property type="match status" value="1"/>
</dbReference>
<dbReference type="Pfam" id="PF09285">
    <property type="entry name" value="Elong-fact-P_C"/>
    <property type="match status" value="1"/>
</dbReference>
<dbReference type="PIRSF" id="PIRSF005901">
    <property type="entry name" value="EF-P"/>
    <property type="match status" value="1"/>
</dbReference>
<dbReference type="SMART" id="SM01185">
    <property type="entry name" value="EFP"/>
    <property type="match status" value="1"/>
</dbReference>
<dbReference type="SMART" id="SM00841">
    <property type="entry name" value="Elong-fact-P_C"/>
    <property type="match status" value="1"/>
</dbReference>
<dbReference type="SUPFAM" id="SSF50249">
    <property type="entry name" value="Nucleic acid-binding proteins"/>
    <property type="match status" value="2"/>
</dbReference>
<dbReference type="SUPFAM" id="SSF50104">
    <property type="entry name" value="Translation proteins SH3-like domain"/>
    <property type="match status" value="1"/>
</dbReference>
<dbReference type="PROSITE" id="PS01275">
    <property type="entry name" value="EFP"/>
    <property type="match status" value="1"/>
</dbReference>